<comment type="function">
    <text evidence="5">Accepts the ubiquitin-like protein NEDD8/RUB1 from the UBA3-ULA1 E1 complex and catalyzes its covalent attachment to other proteins. The major substrate is CDC53/Cullin.</text>
</comment>
<comment type="catalytic activity">
    <reaction>
        <text>[E1 NEDD8-activating enzyme]-S-[NEDD8 protein]-yl-L-cysteine + [E2 NEDD8-conjugating enzyme]-L-cysteine = [E1 NEDD8-activating enzyme]-L-cysteine + [E2 NEDD8-conjugating enzyme]-S-[NEDD8-protein]-yl-L-cysteine.</text>
        <dbReference type="EC" id="2.3.2.34"/>
    </reaction>
</comment>
<comment type="pathway">
    <text>Protein modification; protein neddylation.</text>
</comment>
<comment type="subunit">
    <text evidence="4">Interacts with DCN1.</text>
</comment>
<comment type="interaction">
    <interactant intactId="EBI-19772">
        <id>P52491</id>
    </interactant>
    <interactant intactId="EBI-359390">
        <id>Q13616</id>
        <label>CUL1</label>
    </interactant>
    <organismsDiffer>true</organismsDiffer>
    <experiments>2</experiments>
</comment>
<comment type="PTM">
    <text evidence="4">The acetylation of Met-1 is cotranslational, and not regulatory. The N-acetylmethionine increases affinity for DCUN1D1 by about 2 orders of magnitude and is crucial for NEDD8 transfer to cullins.</text>
</comment>
<comment type="similarity">
    <text evidence="1">Belongs to the ubiquitin-conjugating enzyme family. UBC12 subfamily.</text>
</comment>
<feature type="chain" id="PRO_0000082501" description="NEDD8-conjugating enzyme UBC12">
    <location>
        <begin position="1"/>
        <end position="188"/>
    </location>
</feature>
<feature type="domain" description="UBC core" evidence="1">
    <location>
        <begin position="27"/>
        <end position="177"/>
    </location>
</feature>
<feature type="region of interest" description="Disordered" evidence="3">
    <location>
        <begin position="1"/>
        <end position="23"/>
    </location>
</feature>
<feature type="compositionally biased region" description="Basic residues" evidence="3">
    <location>
        <begin position="1"/>
        <end position="12"/>
    </location>
</feature>
<feature type="active site" description="Glycyl thioester intermediate" evidence="1 2">
    <location>
        <position position="115"/>
    </location>
</feature>
<feature type="modified residue" description="N-acetylmethionine" evidence="4">
    <location>
        <position position="1"/>
    </location>
</feature>
<feature type="helix" evidence="6">
    <location>
        <begin position="1"/>
        <end position="19"/>
    </location>
</feature>
<feature type="strand" evidence="6">
    <location>
        <begin position="20"/>
        <end position="22"/>
    </location>
</feature>
<feature type="helix" evidence="6">
    <location>
        <begin position="27"/>
        <end position="37"/>
    </location>
</feature>
<feature type="strand" evidence="6">
    <location>
        <begin position="45"/>
        <end position="51"/>
    </location>
</feature>
<feature type="strand" evidence="6">
    <location>
        <begin position="63"/>
        <end position="68"/>
    </location>
</feature>
<feature type="strand" evidence="6">
    <location>
        <begin position="71"/>
        <end position="73"/>
    </location>
</feature>
<feature type="turn" evidence="6">
    <location>
        <begin position="74"/>
        <end position="77"/>
    </location>
</feature>
<feature type="strand" evidence="6">
    <location>
        <begin position="80"/>
        <end position="85"/>
    </location>
</feature>
<feature type="turn" evidence="6">
    <location>
        <begin position="88"/>
        <end position="92"/>
    </location>
</feature>
<feature type="strand" evidence="6">
    <location>
        <begin position="96"/>
        <end position="99"/>
    </location>
</feature>
<feature type="strand" evidence="6">
    <location>
        <begin position="112"/>
        <end position="114"/>
    </location>
</feature>
<feature type="helix" evidence="6">
    <location>
        <begin position="117"/>
        <end position="119"/>
    </location>
</feature>
<feature type="turn" evidence="6">
    <location>
        <begin position="120"/>
        <end position="122"/>
    </location>
</feature>
<feature type="helix" evidence="6">
    <location>
        <begin position="129"/>
        <end position="141"/>
    </location>
</feature>
<feature type="helix" evidence="6">
    <location>
        <begin position="151"/>
        <end position="158"/>
    </location>
</feature>
<feature type="helix" evidence="6">
    <location>
        <begin position="161"/>
        <end position="172"/>
    </location>
</feature>
<gene>
    <name type="primary">UBC12</name>
    <name type="ordered locus">YLR306W</name>
    <name type="ORF">L2142.3</name>
</gene>
<evidence type="ECO:0000255" key="1">
    <source>
        <dbReference type="PROSITE-ProRule" id="PRU00388"/>
    </source>
</evidence>
<evidence type="ECO:0000255" key="2">
    <source>
        <dbReference type="PROSITE-ProRule" id="PRU10133"/>
    </source>
</evidence>
<evidence type="ECO:0000256" key="3">
    <source>
        <dbReference type="SAM" id="MobiDB-lite"/>
    </source>
</evidence>
<evidence type="ECO:0000269" key="4">
    <source>
    </source>
</evidence>
<evidence type="ECO:0000269" key="5">
    <source>
    </source>
</evidence>
<evidence type="ECO:0007829" key="6">
    <source>
        <dbReference type="PDB" id="3O2U"/>
    </source>
</evidence>
<sequence length="188" mass="21203">MLKLRQLQKKKQKENENSSSIQPNLSAARIRLKRDLDSLDLPPTVTLNVITSPDSADRSQSPKLEVIVRPDEGYYNYGSINFNLDFNEVYPIEPPKVVCLKKIFHPNIDLKGNVCLNILREDWSPALDLQSIITGLLFLFLEPNPNDPLNKDAAKLLCEGEKEFAEAVRLTMSGGSIEHVKYDNIVSP</sequence>
<keyword id="KW-0002">3D-structure</keyword>
<keyword id="KW-0007">Acetylation</keyword>
<keyword id="KW-0067">ATP-binding</keyword>
<keyword id="KW-0547">Nucleotide-binding</keyword>
<keyword id="KW-1185">Reference proteome</keyword>
<keyword id="KW-0808">Transferase</keyword>
<keyword id="KW-0833">Ubl conjugation pathway</keyword>
<reference key="1">
    <citation type="journal article" date="1998" name="EMBO J.">
        <title>A novel protein modification pathway related to the ubiquitin system.</title>
        <authorList>
            <person name="Liakopoulos D."/>
            <person name="Doenges G."/>
            <person name="Matuschewski K."/>
            <person name="Jentsch S."/>
        </authorList>
    </citation>
    <scope>NUCLEOTIDE SEQUENCE [GENOMIC DNA]</scope>
    <scope>FUNCTION</scope>
    <source>
        <strain>ATCC 200912 / DF5</strain>
    </source>
</reference>
<reference key="2">
    <citation type="journal article" date="1997" name="Nature">
        <title>The nucleotide sequence of Saccharomyces cerevisiae chromosome XII.</title>
        <authorList>
            <person name="Johnston M."/>
            <person name="Hillier L.W."/>
            <person name="Riles L."/>
            <person name="Albermann K."/>
            <person name="Andre B."/>
            <person name="Ansorge W."/>
            <person name="Benes V."/>
            <person name="Brueckner M."/>
            <person name="Delius H."/>
            <person name="Dubois E."/>
            <person name="Duesterhoeft A."/>
            <person name="Entian K.-D."/>
            <person name="Floeth M."/>
            <person name="Goffeau A."/>
            <person name="Hebling U."/>
            <person name="Heumann K."/>
            <person name="Heuss-Neitzel D."/>
            <person name="Hilbert H."/>
            <person name="Hilger F."/>
            <person name="Kleine K."/>
            <person name="Koetter P."/>
            <person name="Louis E.J."/>
            <person name="Messenguy F."/>
            <person name="Mewes H.-W."/>
            <person name="Miosga T."/>
            <person name="Moestl D."/>
            <person name="Mueller-Auer S."/>
            <person name="Nentwich U."/>
            <person name="Obermaier B."/>
            <person name="Piravandi E."/>
            <person name="Pohl T.M."/>
            <person name="Portetelle D."/>
            <person name="Purnelle B."/>
            <person name="Rechmann S."/>
            <person name="Rieger M."/>
            <person name="Rinke M."/>
            <person name="Rose M."/>
            <person name="Scharfe M."/>
            <person name="Scherens B."/>
            <person name="Scholler P."/>
            <person name="Schwager C."/>
            <person name="Schwarz S."/>
            <person name="Underwood A.P."/>
            <person name="Urrestarazu L.A."/>
            <person name="Vandenbol M."/>
            <person name="Verhasselt P."/>
            <person name="Vierendeels F."/>
            <person name="Voet M."/>
            <person name="Volckaert G."/>
            <person name="Voss H."/>
            <person name="Wambutt R."/>
            <person name="Wedler E."/>
            <person name="Wedler H."/>
            <person name="Zimmermann F.K."/>
            <person name="Zollner A."/>
            <person name="Hani J."/>
            <person name="Hoheisel J.D."/>
        </authorList>
    </citation>
    <scope>NUCLEOTIDE SEQUENCE [LARGE SCALE GENOMIC DNA]</scope>
    <source>
        <strain>ATCC 204508 / S288c</strain>
    </source>
</reference>
<reference key="3">
    <citation type="journal article" date="2014" name="G3 (Bethesda)">
        <title>The reference genome sequence of Saccharomyces cerevisiae: Then and now.</title>
        <authorList>
            <person name="Engel S.R."/>
            <person name="Dietrich F.S."/>
            <person name="Fisk D.G."/>
            <person name="Binkley G."/>
            <person name="Balakrishnan R."/>
            <person name="Costanzo M.C."/>
            <person name="Dwight S.S."/>
            <person name="Hitz B.C."/>
            <person name="Karra K."/>
            <person name="Nash R.S."/>
            <person name="Weng S."/>
            <person name="Wong E.D."/>
            <person name="Lloyd P."/>
            <person name="Skrzypek M.S."/>
            <person name="Miyasato S.R."/>
            <person name="Simison M."/>
            <person name="Cherry J.M."/>
        </authorList>
    </citation>
    <scope>GENOME REANNOTATION</scope>
    <source>
        <strain>ATCC 204508 / S288c</strain>
    </source>
</reference>
<reference key="4">
    <citation type="journal article" date="2011" name="Science">
        <title>N-terminal acetylation acts as an avidity enhancer within an interconnected multiprotein complex.</title>
        <authorList>
            <person name="Scott D.C."/>
            <person name="Monda J.K."/>
            <person name="Bennett E.J."/>
            <person name="Harper J.W."/>
            <person name="Schulman B.A."/>
        </authorList>
    </citation>
    <scope>X-RAY CRYSTALLOGRAPHY (2.3 ANGSTROMS) OF 2-24 IN COMPLEX WITH DCN1</scope>
    <scope>ACETYLATION AT MET-1</scope>
</reference>
<protein>
    <recommendedName>
        <fullName>NEDD8-conjugating enzyme UBC12</fullName>
        <ecNumber>2.3.2.34</ecNumber>
    </recommendedName>
    <alternativeName>
        <fullName>RUB1-conjugating enzyme</fullName>
    </alternativeName>
    <alternativeName>
        <fullName>Ubiquitin carrier protein 12</fullName>
    </alternativeName>
</protein>
<organism>
    <name type="scientific">Saccharomyces cerevisiae (strain ATCC 204508 / S288c)</name>
    <name type="common">Baker's yeast</name>
    <dbReference type="NCBI Taxonomy" id="559292"/>
    <lineage>
        <taxon>Eukaryota</taxon>
        <taxon>Fungi</taxon>
        <taxon>Dikarya</taxon>
        <taxon>Ascomycota</taxon>
        <taxon>Saccharomycotina</taxon>
        <taxon>Saccharomycetes</taxon>
        <taxon>Saccharomycetales</taxon>
        <taxon>Saccharomycetaceae</taxon>
        <taxon>Saccharomyces</taxon>
    </lineage>
</organism>
<proteinExistence type="evidence at protein level"/>
<accession>P52491</accession>
<accession>D6VYU9</accession>
<dbReference type="EC" id="2.3.2.34"/>
<dbReference type="EMBL" id="X99442">
    <property type="protein sequence ID" value="CAA67805.1"/>
    <property type="molecule type" value="Genomic_DNA"/>
</dbReference>
<dbReference type="EMBL" id="U17247">
    <property type="protein sequence ID" value="AAB67357.1"/>
    <property type="molecule type" value="Genomic_DNA"/>
</dbReference>
<dbReference type="EMBL" id="BK006945">
    <property type="protein sequence ID" value="DAA09615.1"/>
    <property type="molecule type" value="Genomic_DNA"/>
</dbReference>
<dbReference type="PIR" id="S51438">
    <property type="entry name" value="S51438"/>
</dbReference>
<dbReference type="RefSeq" id="NP_013409.1">
    <property type="nucleotide sequence ID" value="NM_001182194.1"/>
</dbReference>
<dbReference type="PDB" id="3O2U">
    <property type="method" value="X-ray"/>
    <property type="resolution" value="2.00 A"/>
    <property type="chains" value="A/B=1-188"/>
</dbReference>
<dbReference type="PDB" id="3TDI">
    <property type="method" value="X-ray"/>
    <property type="resolution" value="2.30 A"/>
    <property type="chains" value="C/D=1-24"/>
</dbReference>
<dbReference type="PDBsum" id="3O2U"/>
<dbReference type="PDBsum" id="3TDI"/>
<dbReference type="SMR" id="P52491"/>
<dbReference type="BioGRID" id="31571">
    <property type="interactions" value="155"/>
</dbReference>
<dbReference type="DIP" id="DIP-2051N"/>
<dbReference type="FunCoup" id="P52491">
    <property type="interactions" value="981"/>
</dbReference>
<dbReference type="IntAct" id="P52491">
    <property type="interactions" value="7"/>
</dbReference>
<dbReference type="MINT" id="P52491"/>
<dbReference type="STRING" id="4932.YLR306W"/>
<dbReference type="iPTMnet" id="P52491"/>
<dbReference type="PaxDb" id="4932-YLR306W"/>
<dbReference type="PeptideAtlas" id="P52491"/>
<dbReference type="EnsemblFungi" id="YLR306W_mRNA">
    <property type="protein sequence ID" value="YLR306W"/>
    <property type="gene ID" value="YLR306W"/>
</dbReference>
<dbReference type="GeneID" id="851015"/>
<dbReference type="KEGG" id="sce:YLR306W"/>
<dbReference type="AGR" id="SGD:S000004297"/>
<dbReference type="SGD" id="S000004297">
    <property type="gene designation" value="UBC12"/>
</dbReference>
<dbReference type="VEuPathDB" id="FungiDB:YLR306W"/>
<dbReference type="eggNOG" id="KOG0420">
    <property type="taxonomic scope" value="Eukaryota"/>
</dbReference>
<dbReference type="GeneTree" id="ENSGT00940000163935"/>
<dbReference type="HOGENOM" id="CLU_030988_6_0_1"/>
<dbReference type="InParanoid" id="P52491"/>
<dbReference type="OMA" id="YDNIVSP"/>
<dbReference type="OrthoDB" id="10249039at2759"/>
<dbReference type="BioCyc" id="YEAST:G3O-32394-MONOMER"/>
<dbReference type="Reactome" id="R-SCE-8951664">
    <property type="pathway name" value="Neddylation"/>
</dbReference>
<dbReference type="Reactome" id="R-SCE-983168">
    <property type="pathway name" value="Antigen processing: Ubiquitination &amp; Proteasome degradation"/>
</dbReference>
<dbReference type="UniPathway" id="UPA00885"/>
<dbReference type="BioGRID-ORCS" id="851015">
    <property type="hits" value="0 hits in 10 CRISPR screens"/>
</dbReference>
<dbReference type="EvolutionaryTrace" id="P52491"/>
<dbReference type="PRO" id="PR:P52491"/>
<dbReference type="Proteomes" id="UP000002311">
    <property type="component" value="Chromosome XII"/>
</dbReference>
<dbReference type="RNAct" id="P52491">
    <property type="molecule type" value="protein"/>
</dbReference>
<dbReference type="GO" id="GO:0005829">
    <property type="term" value="C:cytosol"/>
    <property type="evidence" value="ECO:0000318"/>
    <property type="project" value="GO_Central"/>
</dbReference>
<dbReference type="GO" id="GO:0005634">
    <property type="term" value="C:nucleus"/>
    <property type="evidence" value="ECO:0000318"/>
    <property type="project" value="GO_Central"/>
</dbReference>
<dbReference type="GO" id="GO:0005524">
    <property type="term" value="F:ATP binding"/>
    <property type="evidence" value="ECO:0007669"/>
    <property type="project" value="UniProtKB-KW"/>
</dbReference>
<dbReference type="GO" id="GO:0061654">
    <property type="term" value="F:NEDD8 conjugating enzyme activity"/>
    <property type="evidence" value="ECO:0007669"/>
    <property type="project" value="UniProtKB-EC"/>
</dbReference>
<dbReference type="GO" id="GO:0019788">
    <property type="term" value="F:NEDD8 transferase activity"/>
    <property type="evidence" value="ECO:0000314"/>
    <property type="project" value="SGD"/>
</dbReference>
<dbReference type="GO" id="GO:0045116">
    <property type="term" value="P:protein neddylation"/>
    <property type="evidence" value="ECO:0000314"/>
    <property type="project" value="SGD"/>
</dbReference>
<dbReference type="CDD" id="cd23794">
    <property type="entry name" value="UBCc_UBE2F_UBE2M"/>
    <property type="match status" value="1"/>
</dbReference>
<dbReference type="FunFam" id="3.10.110.10:FF:000005">
    <property type="entry name" value="NEDD8-conjugating enzyme Ubc12"/>
    <property type="match status" value="1"/>
</dbReference>
<dbReference type="Gene3D" id="3.10.110.10">
    <property type="entry name" value="Ubiquitin Conjugating Enzyme"/>
    <property type="match status" value="1"/>
</dbReference>
<dbReference type="InterPro" id="IPR050113">
    <property type="entry name" value="Ub_conjugating_enzyme"/>
</dbReference>
<dbReference type="InterPro" id="IPR000608">
    <property type="entry name" value="UBQ-conjugat_E2_core"/>
</dbReference>
<dbReference type="InterPro" id="IPR023313">
    <property type="entry name" value="UBQ-conjugating_AS"/>
</dbReference>
<dbReference type="InterPro" id="IPR016135">
    <property type="entry name" value="UBQ-conjugating_enzyme/RWD"/>
</dbReference>
<dbReference type="PANTHER" id="PTHR24067">
    <property type="entry name" value="UBIQUITIN-CONJUGATING ENZYME E2"/>
    <property type="match status" value="1"/>
</dbReference>
<dbReference type="Pfam" id="PF00179">
    <property type="entry name" value="UQ_con"/>
    <property type="match status" value="1"/>
</dbReference>
<dbReference type="SMART" id="SM00212">
    <property type="entry name" value="UBCc"/>
    <property type="match status" value="1"/>
</dbReference>
<dbReference type="SUPFAM" id="SSF54495">
    <property type="entry name" value="UBC-like"/>
    <property type="match status" value="1"/>
</dbReference>
<dbReference type="PROSITE" id="PS00183">
    <property type="entry name" value="UBC_1"/>
    <property type="match status" value="1"/>
</dbReference>
<dbReference type="PROSITE" id="PS50127">
    <property type="entry name" value="UBC_2"/>
    <property type="match status" value="1"/>
</dbReference>
<name>UBC12_YEAST</name>